<keyword id="KW-0963">Cytoplasm</keyword>
<keyword id="KW-0489">Methyltransferase</keyword>
<keyword id="KW-0698">rRNA processing</keyword>
<keyword id="KW-0949">S-adenosyl-L-methionine</keyword>
<keyword id="KW-0808">Transferase</keyword>
<sequence length="156" mass="17520">MKIQLIAVGTKMPKWVEEGFQEYRRRFPHDMPLELVEITAGKRGKNADIARILQKEGEAMLAAVPKGNRIVTLDIPGKRWDTEELAVQLESWKLDGRDVSILIGGPEGLAPACKAAADQSWSLSPLTLPHPLVRVVMAESLYRAWSITTNHPYHRE</sequence>
<dbReference type="EC" id="2.1.1.177" evidence="1"/>
<dbReference type="EMBL" id="CP000627">
    <property type="protein sequence ID" value="ABQ21198.1"/>
    <property type="molecule type" value="Genomic_DNA"/>
</dbReference>
<dbReference type="EMBL" id="CP001235">
    <property type="protein sequence ID" value="ACP08978.1"/>
    <property type="molecule type" value="Genomic_DNA"/>
</dbReference>
<dbReference type="RefSeq" id="WP_000701620.1">
    <property type="nucleotide sequence ID" value="NZ_JAACZH010000005.1"/>
</dbReference>
<dbReference type="SMR" id="A5F2Y7"/>
<dbReference type="GeneID" id="93951526"/>
<dbReference type="KEGG" id="vco:VC0395_A0474"/>
<dbReference type="KEGG" id="vcr:VC395_0966"/>
<dbReference type="PATRIC" id="fig|345073.21.peg.937"/>
<dbReference type="eggNOG" id="COG1576">
    <property type="taxonomic scope" value="Bacteria"/>
</dbReference>
<dbReference type="HOGENOM" id="CLU_100552_1_0_6"/>
<dbReference type="OrthoDB" id="9806643at2"/>
<dbReference type="Proteomes" id="UP000000249">
    <property type="component" value="Chromosome 2"/>
</dbReference>
<dbReference type="GO" id="GO:0005737">
    <property type="term" value="C:cytoplasm"/>
    <property type="evidence" value="ECO:0007669"/>
    <property type="project" value="UniProtKB-SubCell"/>
</dbReference>
<dbReference type="GO" id="GO:0070038">
    <property type="term" value="F:rRNA (pseudouridine-N3-)-methyltransferase activity"/>
    <property type="evidence" value="ECO:0007669"/>
    <property type="project" value="UniProtKB-UniRule"/>
</dbReference>
<dbReference type="CDD" id="cd18081">
    <property type="entry name" value="RlmH-like"/>
    <property type="match status" value="1"/>
</dbReference>
<dbReference type="Gene3D" id="3.40.1280.10">
    <property type="match status" value="1"/>
</dbReference>
<dbReference type="HAMAP" id="MF_00658">
    <property type="entry name" value="23SrRNA_methyltr_H"/>
    <property type="match status" value="1"/>
</dbReference>
<dbReference type="InterPro" id="IPR029028">
    <property type="entry name" value="Alpha/beta_knot_MTases"/>
</dbReference>
<dbReference type="InterPro" id="IPR003742">
    <property type="entry name" value="RlmH-like"/>
</dbReference>
<dbReference type="InterPro" id="IPR029026">
    <property type="entry name" value="tRNA_m1G_MTases_N"/>
</dbReference>
<dbReference type="NCBIfam" id="NF000984">
    <property type="entry name" value="PRK00103.1-1"/>
    <property type="match status" value="1"/>
</dbReference>
<dbReference type="NCBIfam" id="NF000986">
    <property type="entry name" value="PRK00103.1-4"/>
    <property type="match status" value="1"/>
</dbReference>
<dbReference type="NCBIfam" id="TIGR00246">
    <property type="entry name" value="tRNA_RlmH_YbeA"/>
    <property type="match status" value="1"/>
</dbReference>
<dbReference type="PANTHER" id="PTHR33603">
    <property type="entry name" value="METHYLTRANSFERASE"/>
    <property type="match status" value="1"/>
</dbReference>
<dbReference type="PANTHER" id="PTHR33603:SF1">
    <property type="entry name" value="RIBOSOMAL RNA LARGE SUBUNIT METHYLTRANSFERASE H"/>
    <property type="match status" value="1"/>
</dbReference>
<dbReference type="Pfam" id="PF02590">
    <property type="entry name" value="SPOUT_MTase"/>
    <property type="match status" value="1"/>
</dbReference>
<dbReference type="PIRSF" id="PIRSF004505">
    <property type="entry name" value="MT_bac"/>
    <property type="match status" value="1"/>
</dbReference>
<dbReference type="SUPFAM" id="SSF75217">
    <property type="entry name" value="alpha/beta knot"/>
    <property type="match status" value="1"/>
</dbReference>
<reference key="1">
    <citation type="submission" date="2007-03" db="EMBL/GenBank/DDBJ databases">
        <authorList>
            <person name="Heidelberg J."/>
        </authorList>
    </citation>
    <scope>NUCLEOTIDE SEQUENCE [LARGE SCALE GENOMIC DNA]</scope>
    <source>
        <strain>ATCC 39541 / Classical Ogawa 395 / O395</strain>
    </source>
</reference>
<reference key="2">
    <citation type="journal article" date="2008" name="PLoS ONE">
        <title>A recalibrated molecular clock and independent origins for the cholera pandemic clones.</title>
        <authorList>
            <person name="Feng L."/>
            <person name="Reeves P.R."/>
            <person name="Lan R."/>
            <person name="Ren Y."/>
            <person name="Gao C."/>
            <person name="Zhou Z."/>
            <person name="Ren Y."/>
            <person name="Cheng J."/>
            <person name="Wang W."/>
            <person name="Wang J."/>
            <person name="Qian W."/>
            <person name="Li D."/>
            <person name="Wang L."/>
        </authorList>
    </citation>
    <scope>NUCLEOTIDE SEQUENCE [LARGE SCALE GENOMIC DNA]</scope>
    <source>
        <strain>ATCC 39541 / Classical Ogawa 395 / O395</strain>
    </source>
</reference>
<evidence type="ECO:0000255" key="1">
    <source>
        <dbReference type="HAMAP-Rule" id="MF_00658"/>
    </source>
</evidence>
<name>RLMH_VIBC3</name>
<organism>
    <name type="scientific">Vibrio cholerae serotype O1 (strain ATCC 39541 / Classical Ogawa 395 / O395)</name>
    <dbReference type="NCBI Taxonomy" id="345073"/>
    <lineage>
        <taxon>Bacteria</taxon>
        <taxon>Pseudomonadati</taxon>
        <taxon>Pseudomonadota</taxon>
        <taxon>Gammaproteobacteria</taxon>
        <taxon>Vibrionales</taxon>
        <taxon>Vibrionaceae</taxon>
        <taxon>Vibrio</taxon>
    </lineage>
</organism>
<comment type="function">
    <text evidence="1">Specifically methylates the pseudouridine at position 1915 (m3Psi1915) in 23S rRNA.</text>
</comment>
<comment type="catalytic activity">
    <reaction evidence="1">
        <text>pseudouridine(1915) in 23S rRNA + S-adenosyl-L-methionine = N(3)-methylpseudouridine(1915) in 23S rRNA + S-adenosyl-L-homocysteine + H(+)</text>
        <dbReference type="Rhea" id="RHEA:42752"/>
        <dbReference type="Rhea" id="RHEA-COMP:10221"/>
        <dbReference type="Rhea" id="RHEA-COMP:10222"/>
        <dbReference type="ChEBI" id="CHEBI:15378"/>
        <dbReference type="ChEBI" id="CHEBI:57856"/>
        <dbReference type="ChEBI" id="CHEBI:59789"/>
        <dbReference type="ChEBI" id="CHEBI:65314"/>
        <dbReference type="ChEBI" id="CHEBI:74486"/>
        <dbReference type="EC" id="2.1.1.177"/>
    </reaction>
</comment>
<comment type="subunit">
    <text evidence="1">Homodimer.</text>
</comment>
<comment type="subcellular location">
    <subcellularLocation>
        <location evidence="1">Cytoplasm</location>
    </subcellularLocation>
</comment>
<comment type="similarity">
    <text evidence="1">Belongs to the RNA methyltransferase RlmH family.</text>
</comment>
<accession>A5F2Y7</accession>
<accession>C3LYW2</accession>
<protein>
    <recommendedName>
        <fullName evidence="1">Ribosomal RNA large subunit methyltransferase H</fullName>
        <ecNumber evidence="1">2.1.1.177</ecNumber>
    </recommendedName>
    <alternativeName>
        <fullName evidence="1">23S rRNA (pseudouridine1915-N3)-methyltransferase</fullName>
    </alternativeName>
    <alternativeName>
        <fullName evidence="1">23S rRNA m3Psi1915 methyltransferase</fullName>
    </alternativeName>
    <alternativeName>
        <fullName evidence="1">rRNA (pseudouridine-N3-)-methyltransferase RlmH</fullName>
    </alternativeName>
</protein>
<gene>
    <name evidence="1" type="primary">rlmH</name>
    <name type="ordered locus">VC0395_A0474</name>
    <name type="ordered locus">VC395_0966</name>
</gene>
<proteinExistence type="inferred from homology"/>
<feature type="chain" id="PRO_1000072710" description="Ribosomal RNA large subunit methyltransferase H">
    <location>
        <begin position="1"/>
        <end position="156"/>
    </location>
</feature>
<feature type="binding site" evidence="1">
    <location>
        <position position="73"/>
    </location>
    <ligand>
        <name>S-adenosyl-L-methionine</name>
        <dbReference type="ChEBI" id="CHEBI:59789"/>
    </ligand>
</feature>
<feature type="binding site" evidence="1">
    <location>
        <position position="104"/>
    </location>
    <ligand>
        <name>S-adenosyl-L-methionine</name>
        <dbReference type="ChEBI" id="CHEBI:59789"/>
    </ligand>
</feature>
<feature type="binding site" evidence="1">
    <location>
        <begin position="123"/>
        <end position="128"/>
    </location>
    <ligand>
        <name>S-adenosyl-L-methionine</name>
        <dbReference type="ChEBI" id="CHEBI:59789"/>
    </ligand>
</feature>